<protein>
    <recommendedName>
        <fullName evidence="6">Mitochondrial glutathione transporter SLC25A40</fullName>
    </recommendedName>
    <alternativeName>
        <fullName evidence="6">Solute carrier family 25 member 40</fullName>
    </alternativeName>
</protein>
<proteinExistence type="evidence at transcript level"/>
<reference key="1">
    <citation type="submission" date="2004-07" db="EMBL/GenBank/DDBJ databases">
        <authorList>
            <consortium name="NIH - Zebrafish Gene Collection (ZGC) project"/>
        </authorList>
    </citation>
    <scope>NUCLEOTIDE SEQUENCE [LARGE SCALE MRNA]</scope>
</reference>
<keyword id="KW-0472">Membrane</keyword>
<keyword id="KW-0496">Mitochondrion</keyword>
<keyword id="KW-0999">Mitochondrion inner membrane</keyword>
<keyword id="KW-1185">Reference proteome</keyword>
<keyword id="KW-0677">Repeat</keyword>
<keyword id="KW-0812">Transmembrane</keyword>
<keyword id="KW-1133">Transmembrane helix</keyword>
<keyword id="KW-0813">Transport</keyword>
<name>S2540_DANRE</name>
<evidence type="ECO:0000250" key="1">
    <source>
        <dbReference type="UniProtKB" id="Q8BGP6"/>
    </source>
</evidence>
<evidence type="ECO:0000250" key="2">
    <source>
        <dbReference type="UniProtKB" id="Q8TBP6"/>
    </source>
</evidence>
<evidence type="ECO:0000250" key="3">
    <source>
        <dbReference type="UniProtKB" id="Q9BZJ4"/>
    </source>
</evidence>
<evidence type="ECO:0000255" key="4"/>
<evidence type="ECO:0000303" key="5">
    <source ref="1"/>
</evidence>
<evidence type="ECO:0000305" key="6"/>
<sequence>MSCQESSPGPPGDITPFQQMMASCSGAIITSLLVTPLDVVKIRLQAQKNPFPKGKCFVYCNGLMDHICVCENGNTKVWYKAPGHFSGTLDAFLKIIRMEGIRSLWSGLPPTLIMAVPATVIYFTCYDQLFALLKLKMGDRSDLAPLFAGAIARVGSATVISPLELIRTKMQSEKQSYREMSAVIRSALKNEGLRSLWRGWGPTLLRDVPFSAMYWFNYEKGKWWLCKRYSCSEPTVAITFTAGALSGSIASIITLPFDVVKTKRQVEMGELQTMKLSTQVSSSTCSVMKRIVAENGVSGLFAGFMPRLIKVAPACAIMISTYEFGKAFFRKYNHQKEGQATASQHIISHTEKH</sequence>
<accession>Q6DHC3</accession>
<feature type="chain" id="PRO_0000291812" description="Mitochondrial glutathione transporter SLC25A40">
    <location>
        <begin position="1"/>
        <end position="353"/>
    </location>
</feature>
<feature type="transmembrane region" description="Helical; Name=1" evidence="4">
    <location>
        <begin position="20"/>
        <end position="40"/>
    </location>
</feature>
<feature type="transmembrane region" description="Helical; Name=2" evidence="4">
    <location>
        <begin position="104"/>
        <end position="124"/>
    </location>
</feature>
<feature type="transmembrane region" description="Helical; Name=3" evidence="4">
    <location>
        <begin position="143"/>
        <end position="163"/>
    </location>
</feature>
<feature type="transmembrane region" description="Helical; Name=4" evidence="4">
    <location>
        <begin position="200"/>
        <end position="221"/>
    </location>
</feature>
<feature type="transmembrane region" description="Helical; Name=5" evidence="4">
    <location>
        <begin position="237"/>
        <end position="257"/>
    </location>
</feature>
<feature type="transmembrane region" description="Helical; Name=6" evidence="4">
    <location>
        <begin position="299"/>
        <end position="319"/>
    </location>
</feature>
<feature type="repeat" description="Solcar 1">
    <location>
        <begin position="14"/>
        <end position="132"/>
    </location>
</feature>
<feature type="repeat" description="Solcar 2">
    <location>
        <begin position="140"/>
        <end position="224"/>
    </location>
</feature>
<feature type="repeat" description="Solcar 3">
    <location>
        <begin position="234"/>
        <end position="328"/>
    </location>
</feature>
<dbReference type="EMBL" id="BC076052">
    <property type="protein sequence ID" value="AAH76052.1"/>
    <property type="molecule type" value="mRNA"/>
</dbReference>
<dbReference type="RefSeq" id="NP_001002360.1">
    <property type="nucleotide sequence ID" value="NM_001002360.1"/>
</dbReference>
<dbReference type="RefSeq" id="XP_005158327.1">
    <property type="nucleotide sequence ID" value="XM_005158270.5"/>
</dbReference>
<dbReference type="SMR" id="Q6DHC3"/>
<dbReference type="FunCoup" id="Q6DHC3">
    <property type="interactions" value="1828"/>
</dbReference>
<dbReference type="STRING" id="7955.ENSDARP00000011600"/>
<dbReference type="PaxDb" id="7955-ENSDARP00000011600"/>
<dbReference type="Ensembl" id="ENSDART00000021145">
    <property type="protein sequence ID" value="ENSDARP00000011600"/>
    <property type="gene ID" value="ENSDARG00000015856"/>
</dbReference>
<dbReference type="GeneID" id="436633"/>
<dbReference type="KEGG" id="dre:436633"/>
<dbReference type="AGR" id="ZFIN:ZDB-GENE-040718-52"/>
<dbReference type="CTD" id="55972"/>
<dbReference type="ZFIN" id="ZDB-GENE-040718-52">
    <property type="gene designation" value="slc25a40"/>
</dbReference>
<dbReference type="eggNOG" id="KOG0761">
    <property type="taxonomic scope" value="Eukaryota"/>
</dbReference>
<dbReference type="HOGENOM" id="CLU_015166_0_0_1"/>
<dbReference type="InParanoid" id="Q6DHC3"/>
<dbReference type="OMA" id="YWWGYES"/>
<dbReference type="OrthoDB" id="1747031at2759"/>
<dbReference type="PhylomeDB" id="Q6DHC3"/>
<dbReference type="TreeFam" id="TF314720"/>
<dbReference type="PRO" id="PR:Q6DHC3"/>
<dbReference type="Proteomes" id="UP000000437">
    <property type="component" value="Chromosome 16"/>
</dbReference>
<dbReference type="Bgee" id="ENSDARG00000015856">
    <property type="expression patterns" value="Expressed in mature ovarian follicle and 20 other cell types or tissues"/>
</dbReference>
<dbReference type="ExpressionAtlas" id="Q6DHC3">
    <property type="expression patterns" value="baseline and differential"/>
</dbReference>
<dbReference type="GO" id="GO:0005743">
    <property type="term" value="C:mitochondrial inner membrane"/>
    <property type="evidence" value="ECO:0007669"/>
    <property type="project" value="UniProtKB-SubCell"/>
</dbReference>
<dbReference type="GO" id="GO:0005739">
    <property type="term" value="C:mitochondrion"/>
    <property type="evidence" value="ECO:0000318"/>
    <property type="project" value="GO_Central"/>
</dbReference>
<dbReference type="GO" id="GO:0034634">
    <property type="term" value="F:glutathione transmembrane transporter activity"/>
    <property type="evidence" value="ECO:0000250"/>
    <property type="project" value="UniProtKB"/>
</dbReference>
<dbReference type="GO" id="GO:0170036">
    <property type="term" value="P:import into the mitochondrion"/>
    <property type="evidence" value="ECO:0000318"/>
    <property type="project" value="GO_Central"/>
</dbReference>
<dbReference type="Gene3D" id="1.50.40.10">
    <property type="entry name" value="Mitochondrial carrier domain"/>
    <property type="match status" value="2"/>
</dbReference>
<dbReference type="InterPro" id="IPR002067">
    <property type="entry name" value="Mit_carrier"/>
</dbReference>
<dbReference type="InterPro" id="IPR018108">
    <property type="entry name" value="Mitochondrial_sb/sol_carrier"/>
</dbReference>
<dbReference type="InterPro" id="IPR023395">
    <property type="entry name" value="Mt_carrier_dom_sf"/>
</dbReference>
<dbReference type="InterPro" id="IPR045315">
    <property type="entry name" value="Mtm1-like"/>
</dbReference>
<dbReference type="PANTHER" id="PTHR45760">
    <property type="entry name" value="FI19922P1-RELATED"/>
    <property type="match status" value="1"/>
</dbReference>
<dbReference type="PANTHER" id="PTHR45760:SF5">
    <property type="entry name" value="MITOCHONDRIAL GLUTATHIONE TRANSPORTER SLC25A40-RELATED"/>
    <property type="match status" value="1"/>
</dbReference>
<dbReference type="Pfam" id="PF00153">
    <property type="entry name" value="Mito_carr"/>
    <property type="match status" value="3"/>
</dbReference>
<dbReference type="PRINTS" id="PR00926">
    <property type="entry name" value="MITOCARRIER"/>
</dbReference>
<dbReference type="SUPFAM" id="SSF103506">
    <property type="entry name" value="Mitochondrial carrier"/>
    <property type="match status" value="1"/>
</dbReference>
<dbReference type="PROSITE" id="PS50920">
    <property type="entry name" value="SOLCAR"/>
    <property type="match status" value="3"/>
</dbReference>
<gene>
    <name evidence="2" type="primary">slc25a40</name>
    <name evidence="5" type="ORF">zgc:92520</name>
</gene>
<comment type="function">
    <text evidence="1 2">Probable mitochondrial transporter required for glutathione import into mitochondria. Glutathione, which plays key roles in oxidative metabolism, is produced exclusively in the cytosol and is imported in many organelles (By similarity). Mitochondrial glutathione is required for the activity and stability of proteins containing iron-sulfur clusters (By similarity).</text>
</comment>
<comment type="catalytic activity">
    <reaction evidence="2">
        <text>glutathione(in) = glutathione(out)</text>
        <dbReference type="Rhea" id="RHEA:74819"/>
        <dbReference type="ChEBI" id="CHEBI:57925"/>
    </reaction>
</comment>
<comment type="subcellular location">
    <subcellularLocation>
        <location evidence="3">Mitochondrion inner membrane</location>
        <topology evidence="4">Multi-pass membrane protein</topology>
    </subcellularLocation>
</comment>
<comment type="similarity">
    <text evidence="6">Belongs to the mitochondrial carrier (TC 2.A.29) family.</text>
</comment>
<organism>
    <name type="scientific">Danio rerio</name>
    <name type="common">Zebrafish</name>
    <name type="synonym">Brachydanio rerio</name>
    <dbReference type="NCBI Taxonomy" id="7955"/>
    <lineage>
        <taxon>Eukaryota</taxon>
        <taxon>Metazoa</taxon>
        <taxon>Chordata</taxon>
        <taxon>Craniata</taxon>
        <taxon>Vertebrata</taxon>
        <taxon>Euteleostomi</taxon>
        <taxon>Actinopterygii</taxon>
        <taxon>Neopterygii</taxon>
        <taxon>Teleostei</taxon>
        <taxon>Ostariophysi</taxon>
        <taxon>Cypriniformes</taxon>
        <taxon>Danionidae</taxon>
        <taxon>Danioninae</taxon>
        <taxon>Danio</taxon>
    </lineage>
</organism>